<protein>
    <recommendedName>
        <fullName evidence="1">Ribulose bisphosphate carboxylase small subunit 1</fullName>
        <shortName evidence="1">RuBisCO small subunit 1</shortName>
    </recommendedName>
    <alternativeName>
        <fullName evidence="4">Non-carboxysomal form I RuBisCO small subunit</fullName>
    </alternativeName>
</protein>
<dbReference type="EMBL" id="CP000109">
    <property type="protein sequence ID" value="ABB41024.1"/>
    <property type="molecule type" value="Genomic_DNA"/>
</dbReference>
<dbReference type="SMR" id="Q31IJ9"/>
<dbReference type="STRING" id="317025.Tcr_0428"/>
<dbReference type="KEGG" id="tcx:Tcr_0428"/>
<dbReference type="eggNOG" id="COG4451">
    <property type="taxonomic scope" value="Bacteria"/>
</dbReference>
<dbReference type="HOGENOM" id="CLU_098114_2_0_6"/>
<dbReference type="GO" id="GO:0005737">
    <property type="term" value="C:cytoplasm"/>
    <property type="evidence" value="ECO:0007669"/>
    <property type="project" value="UniProtKB-SubCell"/>
</dbReference>
<dbReference type="GO" id="GO:0016984">
    <property type="term" value="F:ribulose-bisphosphate carboxylase activity"/>
    <property type="evidence" value="ECO:0007669"/>
    <property type="project" value="UniProtKB-UniRule"/>
</dbReference>
<dbReference type="GO" id="GO:0019253">
    <property type="term" value="P:reductive pentose-phosphate cycle"/>
    <property type="evidence" value="ECO:0007669"/>
    <property type="project" value="UniProtKB-UniRule"/>
</dbReference>
<dbReference type="CDD" id="cd03527">
    <property type="entry name" value="RuBisCO_small"/>
    <property type="match status" value="1"/>
</dbReference>
<dbReference type="Gene3D" id="3.30.190.10">
    <property type="entry name" value="Ribulose bisphosphate carboxylase, small subunit"/>
    <property type="match status" value="1"/>
</dbReference>
<dbReference type="HAMAP" id="MF_00859">
    <property type="entry name" value="RuBisCO_S_bact"/>
    <property type="match status" value="1"/>
</dbReference>
<dbReference type="InterPro" id="IPR024681">
    <property type="entry name" value="RuBisCO_ssu"/>
</dbReference>
<dbReference type="InterPro" id="IPR000894">
    <property type="entry name" value="RuBisCO_ssu_dom"/>
</dbReference>
<dbReference type="InterPro" id="IPR036385">
    <property type="entry name" value="RuBisCO_ssu_sf"/>
</dbReference>
<dbReference type="PANTHER" id="PTHR31262">
    <property type="entry name" value="RIBULOSE BISPHOSPHATE CARBOXYLASE SMALL CHAIN 1, CHLOROPLASTIC"/>
    <property type="match status" value="1"/>
</dbReference>
<dbReference type="Pfam" id="PF00101">
    <property type="entry name" value="RuBisCO_small"/>
    <property type="match status" value="1"/>
</dbReference>
<dbReference type="SMART" id="SM00961">
    <property type="entry name" value="RuBisCO_small"/>
    <property type="match status" value="1"/>
</dbReference>
<dbReference type="SUPFAM" id="SSF55239">
    <property type="entry name" value="RuBisCO, small subunit"/>
    <property type="match status" value="1"/>
</dbReference>
<accession>Q31IJ9</accession>
<keyword id="KW-0113">Calvin cycle</keyword>
<keyword id="KW-0120">Carbon dioxide fixation</keyword>
<keyword id="KW-0963">Cytoplasm</keyword>
<evidence type="ECO:0000255" key="1">
    <source>
        <dbReference type="HAMAP-Rule" id="MF_00859"/>
    </source>
</evidence>
<evidence type="ECO:0000269" key="2">
    <source>
    </source>
</evidence>
<evidence type="ECO:0000269" key="3">
    <source>
    </source>
</evidence>
<evidence type="ECO:0000303" key="4">
    <source>
    </source>
</evidence>
<evidence type="ECO:0000305" key="5">
    <source>
    </source>
</evidence>
<feature type="chain" id="PRO_0000452046" description="Ribulose bisphosphate carboxylase small subunit 1">
    <location>
        <begin position="1"/>
        <end position="116"/>
    </location>
</feature>
<reference key="1">
    <citation type="journal article" date="2006" name="PLoS Biol.">
        <title>The genome of deep-sea vent chemolithoautotroph Thiomicrospira crunogena XCL-2.</title>
        <authorList>
            <person name="Scott K.M."/>
            <person name="Sievert S.M."/>
            <person name="Abril F.N."/>
            <person name="Ball L.A."/>
            <person name="Barrett C.J."/>
            <person name="Blake R.A."/>
            <person name="Boller A.J."/>
            <person name="Chain P.S.G."/>
            <person name="Clark J.A."/>
            <person name="Davis C.R."/>
            <person name="Detter C."/>
            <person name="Do K.F."/>
            <person name="Dobrinski K.P."/>
            <person name="Faza B.I."/>
            <person name="Fitzpatrick K.A."/>
            <person name="Freyermuth S.K."/>
            <person name="Harmer T.L."/>
            <person name="Hauser L.J."/>
            <person name="Huegler M."/>
            <person name="Kerfeld C.A."/>
            <person name="Klotz M.G."/>
            <person name="Kong W.W."/>
            <person name="Land M."/>
            <person name="Lapidus A."/>
            <person name="Larimer F.W."/>
            <person name="Longo D.L."/>
            <person name="Lucas S."/>
            <person name="Malfatti S.A."/>
            <person name="Massey S.E."/>
            <person name="Martin D.D."/>
            <person name="McCuddin Z."/>
            <person name="Meyer F."/>
            <person name="Moore J.L."/>
            <person name="Ocampo L.H. Jr."/>
            <person name="Paul J.H."/>
            <person name="Paulsen I.T."/>
            <person name="Reep D.K."/>
            <person name="Ren Q."/>
            <person name="Ross R.L."/>
            <person name="Sato P.Y."/>
            <person name="Thomas P."/>
            <person name="Tinkham L.E."/>
            <person name="Zeruth G.T."/>
        </authorList>
    </citation>
    <scope>NUCLEOTIDE SEQUENCE [LARGE SCALE GENOMIC DNA]</scope>
    <source>
        <strain>DSM 25203 / XCL-2</strain>
    </source>
</reference>
<reference key="2">
    <citation type="journal article" date="2008" name="PLoS ONE">
        <title>Halothiobacillus neapolitanus carboxysomes sequester heterologous and chimeric RubisCO species.</title>
        <authorList>
            <person name="Menon B.B."/>
            <person name="Dou Z."/>
            <person name="Heinhorst S."/>
            <person name="Shively J.M."/>
            <person name="Cannon G.C."/>
        </authorList>
    </citation>
    <scope>FUNCTION</scope>
    <scope>SUBCELLULAR LOCATION</scope>
    <source>
        <strain>DSM 25203 / XCL-2</strain>
    </source>
</reference>
<reference key="3">
    <citation type="journal article" date="2017" name="J. Bacteriol.">
        <title>Proteomic and Mutant Analysis of the CO2 Concentrating Mechanism of Hydrothermal Vent Chemolithoautotroph Thiomicrospira crunogena.</title>
        <authorList>
            <consortium name="USF MCB4404L"/>
            <person name="Mangiapia M."/>
            <person name="Brown T.W."/>
            <person name="Chaput D."/>
            <person name="Haller E."/>
            <person name="Harmer T.L."/>
            <person name="Hashemy Z."/>
            <person name="Keeley R."/>
            <person name="Leonard J."/>
            <person name="Mancera P."/>
            <person name="Nicholson D."/>
            <person name="Stevens S."/>
            <person name="Wanjugi P."/>
            <person name="Zabinski T."/>
            <person name="Pan C."/>
            <person name="Scott K.M."/>
        </authorList>
    </citation>
    <scope>INDUCTION</scope>
    <source>
        <strain>DSM 25203 / XCL-2</strain>
    </source>
</reference>
<sequence length="116" mass="13343">MSIQDYPSRLSDPQSRKAETFSYLPKMTAEQIKAQVQYIIDRGWNPAIEHSEPENAFSYYWYMWKLPMFGETDADAVLAEVDACIKANPNNHVRLIGYDNYAQSQGANMLVKRGDM</sequence>
<name>RBS1_HYDCU</name>
<organism>
    <name type="scientific">Hydrogenovibrio crunogenus (strain DSM 25203 / XCL-2)</name>
    <name type="common">Thiomicrospira crunogena</name>
    <dbReference type="NCBI Taxonomy" id="317025"/>
    <lineage>
        <taxon>Bacteria</taxon>
        <taxon>Pseudomonadati</taxon>
        <taxon>Pseudomonadota</taxon>
        <taxon>Gammaproteobacteria</taxon>
        <taxon>Thiotrichales</taxon>
        <taxon>Piscirickettsiaceae</taxon>
        <taxon>Hydrogenovibrio</taxon>
    </lineage>
</organism>
<comment type="function">
    <text evidence="1 5">RuBisCO catalyzes two reactions: the carboxylation of D-ribulose 1,5-bisphosphate, the primary event in carbon dioxide fixation, as well as the oxidative fragmentation of the pentose substrate. Both reactions occur simultaneously and in competition at the same active site. Although the small subunit is not catalytic it is essential for maximal activity.</text>
</comment>
<comment type="function">
    <text evidence="2">Can replace the endogenous type I ccbS gene in H.neapolitanus, reconstituting RuBisCO with about 10% of normal activity; the active enzyme is targeted to carboxysomes (PubMed:18974784).</text>
</comment>
<comment type="subunit">
    <text evidence="1">Heterohexadecamer of 8 large and 8 small subunits.</text>
</comment>
<comment type="subcellular location">
    <subcellularLocation>
        <location evidence="5">Cytoplasm</location>
    </subcellularLocation>
</comment>
<comment type="induction">
    <text evidence="3">Induced by growth in high levels of dissolved inorganic carbon and low NH(3) levels (at protein level).</text>
</comment>
<comment type="miscellaneous">
    <text evidence="1">The basic functional RuBisCO is composed of a large chain homodimer in a 'head-to-tail' conformation. In form I RuBisCO this homodimer is arranged in a barrel-like tetramer with the small subunits forming a tetrameric 'cap' on each end of the 'barrel'.</text>
</comment>
<comment type="similarity">
    <text evidence="1">Belongs to the RuBisCO small chain family.</text>
</comment>
<gene>
    <name evidence="1" type="primary">cbbS1</name>
    <name type="ordered locus">Tcr_0428</name>
</gene>
<proteinExistence type="evidence at protein level"/>